<dbReference type="EC" id="7.1.2.2" evidence="1"/>
<dbReference type="EMBL" id="AP009180">
    <property type="protein sequence ID" value="BAF35040.1"/>
    <property type="molecule type" value="Genomic_DNA"/>
</dbReference>
<dbReference type="RefSeq" id="WP_011672232.1">
    <property type="nucleotide sequence ID" value="NC_008512.1"/>
</dbReference>
<dbReference type="SMR" id="Q05FY1"/>
<dbReference type="STRING" id="387662.CRP_009"/>
<dbReference type="KEGG" id="crp:CRP_009"/>
<dbReference type="HOGENOM" id="CLU_022398_0_2_6"/>
<dbReference type="OrthoDB" id="9801639at2"/>
<dbReference type="Proteomes" id="UP000000777">
    <property type="component" value="Chromosome"/>
</dbReference>
<dbReference type="GO" id="GO:0005886">
    <property type="term" value="C:plasma membrane"/>
    <property type="evidence" value="ECO:0007669"/>
    <property type="project" value="UniProtKB-SubCell"/>
</dbReference>
<dbReference type="GO" id="GO:0045259">
    <property type="term" value="C:proton-transporting ATP synthase complex"/>
    <property type="evidence" value="ECO:0007669"/>
    <property type="project" value="UniProtKB-KW"/>
</dbReference>
<dbReference type="GO" id="GO:0005524">
    <property type="term" value="F:ATP binding"/>
    <property type="evidence" value="ECO:0007669"/>
    <property type="project" value="UniProtKB-UniRule"/>
</dbReference>
<dbReference type="GO" id="GO:0016887">
    <property type="term" value="F:ATP hydrolysis activity"/>
    <property type="evidence" value="ECO:0007669"/>
    <property type="project" value="InterPro"/>
</dbReference>
<dbReference type="GO" id="GO:0046933">
    <property type="term" value="F:proton-transporting ATP synthase activity, rotational mechanism"/>
    <property type="evidence" value="ECO:0007669"/>
    <property type="project" value="UniProtKB-UniRule"/>
</dbReference>
<dbReference type="CDD" id="cd18110">
    <property type="entry name" value="ATP-synt_F1_beta_C"/>
    <property type="match status" value="1"/>
</dbReference>
<dbReference type="CDD" id="cd18115">
    <property type="entry name" value="ATP-synt_F1_beta_N"/>
    <property type="match status" value="1"/>
</dbReference>
<dbReference type="CDD" id="cd01133">
    <property type="entry name" value="F1-ATPase_beta_CD"/>
    <property type="match status" value="1"/>
</dbReference>
<dbReference type="FunFam" id="1.10.1140.10:FF:000005">
    <property type="entry name" value="ATP synthase subunit beta"/>
    <property type="match status" value="1"/>
</dbReference>
<dbReference type="FunFam" id="3.40.50.300:FF:000004">
    <property type="entry name" value="ATP synthase subunit beta"/>
    <property type="match status" value="1"/>
</dbReference>
<dbReference type="Gene3D" id="2.40.10.170">
    <property type="match status" value="1"/>
</dbReference>
<dbReference type="Gene3D" id="1.10.1140.10">
    <property type="entry name" value="Bovine Mitochondrial F1-atpase, Atp Synthase Beta Chain, Chain D, domain 3"/>
    <property type="match status" value="1"/>
</dbReference>
<dbReference type="Gene3D" id="3.40.50.300">
    <property type="entry name" value="P-loop containing nucleotide triphosphate hydrolases"/>
    <property type="match status" value="1"/>
</dbReference>
<dbReference type="HAMAP" id="MF_01347">
    <property type="entry name" value="ATP_synth_beta_bact"/>
    <property type="match status" value="1"/>
</dbReference>
<dbReference type="InterPro" id="IPR003593">
    <property type="entry name" value="AAA+_ATPase"/>
</dbReference>
<dbReference type="InterPro" id="IPR055190">
    <property type="entry name" value="ATP-synt_VA_C"/>
</dbReference>
<dbReference type="InterPro" id="IPR005722">
    <property type="entry name" value="ATP_synth_F1_bsu"/>
</dbReference>
<dbReference type="InterPro" id="IPR020003">
    <property type="entry name" value="ATPase_a/bsu_AS"/>
</dbReference>
<dbReference type="InterPro" id="IPR050053">
    <property type="entry name" value="ATPase_alpha/beta_chains"/>
</dbReference>
<dbReference type="InterPro" id="IPR004100">
    <property type="entry name" value="ATPase_F1/V1/A1_a/bsu_N"/>
</dbReference>
<dbReference type="InterPro" id="IPR036121">
    <property type="entry name" value="ATPase_F1/V1/A1_a/bsu_N_sf"/>
</dbReference>
<dbReference type="InterPro" id="IPR000194">
    <property type="entry name" value="ATPase_F1/V1/A1_a/bsu_nucl-bd"/>
</dbReference>
<dbReference type="InterPro" id="IPR024034">
    <property type="entry name" value="ATPase_F1/V1_b/a_C"/>
</dbReference>
<dbReference type="InterPro" id="IPR027417">
    <property type="entry name" value="P-loop_NTPase"/>
</dbReference>
<dbReference type="NCBIfam" id="TIGR01039">
    <property type="entry name" value="atpD"/>
    <property type="match status" value="1"/>
</dbReference>
<dbReference type="PANTHER" id="PTHR15184">
    <property type="entry name" value="ATP SYNTHASE"/>
    <property type="match status" value="1"/>
</dbReference>
<dbReference type="PANTHER" id="PTHR15184:SF71">
    <property type="entry name" value="ATP SYNTHASE SUBUNIT BETA, MITOCHONDRIAL"/>
    <property type="match status" value="1"/>
</dbReference>
<dbReference type="Pfam" id="PF00006">
    <property type="entry name" value="ATP-synt_ab"/>
    <property type="match status" value="1"/>
</dbReference>
<dbReference type="Pfam" id="PF02874">
    <property type="entry name" value="ATP-synt_ab_N"/>
    <property type="match status" value="1"/>
</dbReference>
<dbReference type="Pfam" id="PF22919">
    <property type="entry name" value="ATP-synt_VA_C"/>
    <property type="match status" value="1"/>
</dbReference>
<dbReference type="SMART" id="SM00382">
    <property type="entry name" value="AAA"/>
    <property type="match status" value="1"/>
</dbReference>
<dbReference type="SUPFAM" id="SSF47917">
    <property type="entry name" value="C-terminal domain of alpha and beta subunits of F1 ATP synthase"/>
    <property type="match status" value="1"/>
</dbReference>
<dbReference type="SUPFAM" id="SSF50615">
    <property type="entry name" value="N-terminal domain of alpha and beta subunits of F1 ATP synthase"/>
    <property type="match status" value="1"/>
</dbReference>
<dbReference type="SUPFAM" id="SSF52540">
    <property type="entry name" value="P-loop containing nucleoside triphosphate hydrolases"/>
    <property type="match status" value="1"/>
</dbReference>
<dbReference type="PROSITE" id="PS00152">
    <property type="entry name" value="ATPASE_ALPHA_BETA"/>
    <property type="match status" value="1"/>
</dbReference>
<organism>
    <name type="scientific">Carsonella ruddii (strain PV)</name>
    <dbReference type="NCBI Taxonomy" id="387662"/>
    <lineage>
        <taxon>Bacteria</taxon>
        <taxon>Pseudomonadati</taxon>
        <taxon>Pseudomonadota</taxon>
        <taxon>Gammaproteobacteria</taxon>
        <taxon>Oceanospirillales</taxon>
        <taxon>Halomonadaceae</taxon>
        <taxon>Zymobacter group</taxon>
        <taxon>Candidatus Carsonella</taxon>
    </lineage>
</organism>
<gene>
    <name evidence="1" type="primary">atpD</name>
    <name type="ordered locus">CRP_009</name>
</gene>
<keyword id="KW-0066">ATP synthesis</keyword>
<keyword id="KW-0067">ATP-binding</keyword>
<keyword id="KW-1003">Cell membrane</keyword>
<keyword id="KW-0139">CF(1)</keyword>
<keyword id="KW-0375">Hydrogen ion transport</keyword>
<keyword id="KW-0406">Ion transport</keyword>
<keyword id="KW-0472">Membrane</keyword>
<keyword id="KW-0547">Nucleotide-binding</keyword>
<keyword id="KW-1278">Translocase</keyword>
<keyword id="KW-0813">Transport</keyword>
<proteinExistence type="inferred from homology"/>
<comment type="function">
    <text evidence="1">Produces ATP from ADP in the presence of a proton gradient across the membrane. The catalytic sites are hosted primarily by the beta subunits.</text>
</comment>
<comment type="catalytic activity">
    <reaction evidence="1">
        <text>ATP + H2O + 4 H(+)(in) = ADP + phosphate + 5 H(+)(out)</text>
        <dbReference type="Rhea" id="RHEA:57720"/>
        <dbReference type="ChEBI" id="CHEBI:15377"/>
        <dbReference type="ChEBI" id="CHEBI:15378"/>
        <dbReference type="ChEBI" id="CHEBI:30616"/>
        <dbReference type="ChEBI" id="CHEBI:43474"/>
        <dbReference type="ChEBI" id="CHEBI:456216"/>
        <dbReference type="EC" id="7.1.2.2"/>
    </reaction>
</comment>
<comment type="subunit">
    <text evidence="1">F-type ATPases have 2 components, CF(1) - the catalytic core - and CF(0) - the membrane proton channel. CF(1) has five subunits: alpha(3), beta(3), gamma(1), delta(1), epsilon(1). CF(0) has three main subunits: a(1), b(2) and c(9-12). The alpha and beta chains form an alternating ring which encloses part of the gamma chain. CF(1) is attached to CF(0) by a central stalk formed by the gamma and epsilon chains, while a peripheral stalk is formed by the delta and b chains.</text>
</comment>
<comment type="subcellular location">
    <subcellularLocation>
        <location evidence="1">Cell membrane</location>
        <topology evidence="1">Peripheral membrane protein</topology>
    </subcellularLocation>
</comment>
<comment type="similarity">
    <text evidence="1">Belongs to the ATPase alpha/beta chains family.</text>
</comment>
<accession>Q05FY1</accession>
<sequence length="447" mass="50106">MIGRIVQILGSIVDVEFKKNNIPYIYNALFIKEFNLYLEVQQQIGNNIVRTIALGSTYGLKRYLLVIDTKKPILTPVGNCTLGRILNVLGNPIDNNGEIISNKKKPIHCSPPKFSDQVFSNNILETGIKVIDLLCPFLRGGKIGLFGGAGVGKTINMMELIRNIAIEHKGCSVFIGVGERTREGNDFYYEMKESNVLDKVSLIYGQMNEPSGNRLRVALTGLSIAEEFREMGKDVLLFIDNIYRFTLAGTEISALLGRMPSAVGYQPTLAEEMGKLQERISSTKNGSITSVQAIYVPADDLTDPSPSTTFTHLDSTIVLSRQIAELGIYPAIDPLESYSKQLDPYIVGIEHYEIANSVKFYLQKYKELKDTIAILGMDELSENDQIIVKRARKLQRFFSQPFFVGEIFTGIKGEYVNIKDTIQCFKNILNGEFDNINEKNFYMIGKI</sequence>
<feature type="chain" id="PRO_0000339509" description="ATP synthase subunit beta">
    <location>
        <begin position="1"/>
        <end position="447"/>
    </location>
</feature>
<feature type="binding site" evidence="1">
    <location>
        <begin position="147"/>
        <end position="154"/>
    </location>
    <ligand>
        <name>ATP</name>
        <dbReference type="ChEBI" id="CHEBI:30616"/>
    </ligand>
</feature>
<evidence type="ECO:0000255" key="1">
    <source>
        <dbReference type="HAMAP-Rule" id="MF_01347"/>
    </source>
</evidence>
<protein>
    <recommendedName>
        <fullName evidence="1">ATP synthase subunit beta</fullName>
        <ecNumber evidence="1">7.1.2.2</ecNumber>
    </recommendedName>
    <alternativeName>
        <fullName evidence="1">ATP synthase F1 sector subunit beta</fullName>
    </alternativeName>
    <alternativeName>
        <fullName evidence="1">F-ATPase subunit beta</fullName>
    </alternativeName>
</protein>
<name>ATPB_CARRP</name>
<reference key="1">
    <citation type="journal article" date="2006" name="Science">
        <title>The 160-kilobase genome of the bacterial endosymbiont Carsonella.</title>
        <authorList>
            <person name="Nakabachi A."/>
            <person name="Yamashita A."/>
            <person name="Toh H."/>
            <person name="Ishikawa H."/>
            <person name="Dunbar H.E."/>
            <person name="Moran N.A."/>
            <person name="Hattori M."/>
        </authorList>
    </citation>
    <scope>NUCLEOTIDE SEQUENCE [LARGE SCALE GENOMIC DNA]</scope>
    <source>
        <strain>PV</strain>
    </source>
</reference>